<sequence length="330" mass="37268">MLDFLAITLSGKPPQVIQGETVNLKWQWLGEGILTLVPHRSYTQSVVISAGIHGNETAPIEILNQLVTDLLAGQLPLSVRLLVLLGNPPAIRKGKRYLSNDINRMFGGRYQHYTPSDETRRASTLEQRVMAFFQASHTSERLHYDLHTAIRGSYHPRFGLLPYQQTPYSAAMFRWLRDIELDALVMHTSAGGTFAHFSSERCQAASCTLELGKALPFGENQLSQFSAITQGLRSLVSDSALPARKTENMKYYRVVKSLLRQHPDFKLRVAEDTVNFTRFAQGTLLTEQPNDNYRVEHPYEWILFPNPHVALGLRAGMMLVKMCESELPIT</sequence>
<name>ASTE_YERPE</name>
<protein>
    <recommendedName>
        <fullName evidence="1">Succinylglutamate desuccinylase</fullName>
        <ecNumber evidence="1">3.5.1.96</ecNumber>
    </recommendedName>
</protein>
<comment type="function">
    <text evidence="1">Transforms N(2)-succinylglutamate into succinate and glutamate.</text>
</comment>
<comment type="catalytic activity">
    <reaction evidence="1">
        <text>N-succinyl-L-glutamate + H2O = L-glutamate + succinate</text>
        <dbReference type="Rhea" id="RHEA:15169"/>
        <dbReference type="ChEBI" id="CHEBI:15377"/>
        <dbReference type="ChEBI" id="CHEBI:29985"/>
        <dbReference type="ChEBI" id="CHEBI:30031"/>
        <dbReference type="ChEBI" id="CHEBI:58763"/>
        <dbReference type="EC" id="3.5.1.96"/>
    </reaction>
</comment>
<comment type="cofactor">
    <cofactor evidence="1">
        <name>Zn(2+)</name>
        <dbReference type="ChEBI" id="CHEBI:29105"/>
    </cofactor>
    <text evidence="1">Binds 1 zinc ion per subunit.</text>
</comment>
<comment type="pathway">
    <text evidence="1">Amino-acid degradation; L-arginine degradation via AST pathway; L-glutamate and succinate from L-arginine: step 5/5.</text>
</comment>
<comment type="similarity">
    <text evidence="1">Belongs to the AspA/AstE family. Succinylglutamate desuccinylase subfamily.</text>
</comment>
<comment type="sequence caution" evidence="2">
    <conflict type="erroneous initiation">
        <sequence resource="EMBL-CDS" id="AAM85903"/>
    </conflict>
</comment>
<comment type="sequence caution" evidence="2">
    <conflict type="erroneous initiation">
        <sequence resource="EMBL-CDS" id="AAS61940"/>
    </conflict>
</comment>
<evidence type="ECO:0000255" key="1">
    <source>
        <dbReference type="HAMAP-Rule" id="MF_00767"/>
    </source>
</evidence>
<evidence type="ECO:0000305" key="2"/>
<gene>
    <name evidence="1" type="primary">astE</name>
    <name type="ordered locus">YPO1966</name>
    <name type="ordered locus">y2345</name>
    <name type="ordered locus">YP_1711</name>
</gene>
<keyword id="KW-0056">Arginine metabolism</keyword>
<keyword id="KW-0378">Hydrolase</keyword>
<keyword id="KW-0479">Metal-binding</keyword>
<keyword id="KW-1185">Reference proteome</keyword>
<keyword id="KW-0862">Zinc</keyword>
<dbReference type="EC" id="3.5.1.96" evidence="1"/>
<dbReference type="EMBL" id="AL031866">
    <property type="protein sequence ID" value="CAA21337.1"/>
    <property type="molecule type" value="Genomic_DNA"/>
</dbReference>
<dbReference type="EMBL" id="AL590842">
    <property type="protein sequence ID" value="CAL20604.1"/>
    <property type="molecule type" value="Genomic_DNA"/>
</dbReference>
<dbReference type="EMBL" id="AE009952">
    <property type="protein sequence ID" value="AAM85903.1"/>
    <property type="status" value="ALT_INIT"/>
    <property type="molecule type" value="Genomic_DNA"/>
</dbReference>
<dbReference type="EMBL" id="AE017042">
    <property type="protein sequence ID" value="AAS61940.1"/>
    <property type="status" value="ALT_INIT"/>
    <property type="molecule type" value="Genomic_DNA"/>
</dbReference>
<dbReference type="PIR" id="AI0239">
    <property type="entry name" value="AI0239"/>
</dbReference>
<dbReference type="PIR" id="T46994">
    <property type="entry name" value="T46994"/>
</dbReference>
<dbReference type="RefSeq" id="WP_002212028.1">
    <property type="nucleotide sequence ID" value="NZ_WUCM01000003.1"/>
</dbReference>
<dbReference type="RefSeq" id="YP_002346955.1">
    <property type="nucleotide sequence ID" value="NC_003143.1"/>
</dbReference>
<dbReference type="SMR" id="Q9ZC70"/>
<dbReference type="STRING" id="214092.YPO1966"/>
<dbReference type="PaxDb" id="214092-YPO1966"/>
<dbReference type="DNASU" id="1147292"/>
<dbReference type="EnsemblBacteria" id="AAS61940">
    <property type="protein sequence ID" value="AAS61940"/>
    <property type="gene ID" value="YP_1711"/>
</dbReference>
<dbReference type="GeneID" id="49786048"/>
<dbReference type="KEGG" id="ype:YPO1966"/>
<dbReference type="KEGG" id="ypk:y2345"/>
<dbReference type="KEGG" id="ypl:CH46_3148"/>
<dbReference type="KEGG" id="ypm:YP_1711"/>
<dbReference type="KEGG" id="ypv:BZ15_1575"/>
<dbReference type="KEGG" id="ypw:CH59_3764"/>
<dbReference type="PATRIC" id="fig|214092.21.peg.2343"/>
<dbReference type="eggNOG" id="COG2988">
    <property type="taxonomic scope" value="Bacteria"/>
</dbReference>
<dbReference type="HOGENOM" id="CLU_071608_0_0_6"/>
<dbReference type="OMA" id="CAVHGNE"/>
<dbReference type="OrthoDB" id="5290473at2"/>
<dbReference type="UniPathway" id="UPA00185">
    <property type="reaction ID" value="UER00283"/>
</dbReference>
<dbReference type="Proteomes" id="UP000000815">
    <property type="component" value="Chromosome"/>
</dbReference>
<dbReference type="Proteomes" id="UP000001019">
    <property type="component" value="Chromosome"/>
</dbReference>
<dbReference type="Proteomes" id="UP000002490">
    <property type="component" value="Chromosome"/>
</dbReference>
<dbReference type="GO" id="GO:0016811">
    <property type="term" value="F:hydrolase activity, acting on carbon-nitrogen (but not peptide) bonds, in linear amides"/>
    <property type="evidence" value="ECO:0000318"/>
    <property type="project" value="GO_Central"/>
</dbReference>
<dbReference type="GO" id="GO:0016788">
    <property type="term" value="F:hydrolase activity, acting on ester bonds"/>
    <property type="evidence" value="ECO:0007669"/>
    <property type="project" value="UniProtKB-UniRule"/>
</dbReference>
<dbReference type="GO" id="GO:0009017">
    <property type="term" value="F:succinylglutamate desuccinylase activity"/>
    <property type="evidence" value="ECO:0007669"/>
    <property type="project" value="UniProtKB-EC"/>
</dbReference>
<dbReference type="GO" id="GO:0008270">
    <property type="term" value="F:zinc ion binding"/>
    <property type="evidence" value="ECO:0007669"/>
    <property type="project" value="UniProtKB-UniRule"/>
</dbReference>
<dbReference type="GO" id="GO:0019544">
    <property type="term" value="P:arginine catabolic process to glutamate"/>
    <property type="evidence" value="ECO:0007669"/>
    <property type="project" value="UniProtKB-UniRule"/>
</dbReference>
<dbReference type="GO" id="GO:0019545">
    <property type="term" value="P:arginine catabolic process to succinate"/>
    <property type="evidence" value="ECO:0007669"/>
    <property type="project" value="UniProtKB-UniRule"/>
</dbReference>
<dbReference type="CDD" id="cd03855">
    <property type="entry name" value="M14_ASTE"/>
    <property type="match status" value="1"/>
</dbReference>
<dbReference type="FunFam" id="3.40.630.10:FF:000017">
    <property type="entry name" value="Succinylglutamate desuccinylase"/>
    <property type="match status" value="1"/>
</dbReference>
<dbReference type="Gene3D" id="3.40.630.10">
    <property type="entry name" value="Zn peptidases"/>
    <property type="match status" value="1"/>
</dbReference>
<dbReference type="HAMAP" id="MF_00767">
    <property type="entry name" value="Arg_catab_AstE"/>
    <property type="match status" value="1"/>
</dbReference>
<dbReference type="InterPro" id="IPR050178">
    <property type="entry name" value="AspA/AstE_fam"/>
</dbReference>
<dbReference type="InterPro" id="IPR055438">
    <property type="entry name" value="AstE_AspA_cat"/>
</dbReference>
<dbReference type="InterPro" id="IPR007036">
    <property type="entry name" value="Aste_AspA_hybrid_dom"/>
</dbReference>
<dbReference type="InterPro" id="IPR016681">
    <property type="entry name" value="SuccinylGlu_desuccinylase"/>
</dbReference>
<dbReference type="NCBIfam" id="TIGR03242">
    <property type="entry name" value="arg_catab_astE"/>
    <property type="match status" value="1"/>
</dbReference>
<dbReference type="NCBIfam" id="NF003706">
    <property type="entry name" value="PRK05324.1"/>
    <property type="match status" value="1"/>
</dbReference>
<dbReference type="PANTHER" id="PTHR15162">
    <property type="entry name" value="ASPARTOACYLASE"/>
    <property type="match status" value="1"/>
</dbReference>
<dbReference type="PANTHER" id="PTHR15162:SF7">
    <property type="entry name" value="SUCCINYLGLUTAMATE DESUCCINYLASE"/>
    <property type="match status" value="1"/>
</dbReference>
<dbReference type="Pfam" id="PF24827">
    <property type="entry name" value="AstE_AspA_cat"/>
    <property type="match status" value="1"/>
</dbReference>
<dbReference type="Pfam" id="PF04952">
    <property type="entry name" value="AstE_AspA_hybrid"/>
    <property type="match status" value="1"/>
</dbReference>
<dbReference type="PIRSF" id="PIRSF017020">
    <property type="entry name" value="AstE"/>
    <property type="match status" value="1"/>
</dbReference>
<dbReference type="SUPFAM" id="SSF53187">
    <property type="entry name" value="Zn-dependent exopeptidases"/>
    <property type="match status" value="1"/>
</dbReference>
<reference key="1">
    <citation type="submission" date="1998-10" db="EMBL/GenBank/DDBJ databases">
        <title>DNA sequence of the 102 kbases unstable region of Yersinia pestis.</title>
        <authorList>
            <person name="Buchrieser C."/>
            <person name="Rusniok C."/>
            <person name="Couve E."/>
            <person name="Frangeul L."/>
            <person name="Billault A."/>
            <person name="Kunst F."/>
            <person name="Carniel E."/>
            <person name="Glaser P."/>
        </authorList>
    </citation>
    <scope>NUCLEOTIDE SEQUENCE [GENOMIC DNA]</scope>
    <source>
        <strain>6/69</strain>
    </source>
</reference>
<reference key="2">
    <citation type="journal article" date="2001" name="Nature">
        <title>Genome sequence of Yersinia pestis, the causative agent of plague.</title>
        <authorList>
            <person name="Parkhill J."/>
            <person name="Wren B.W."/>
            <person name="Thomson N.R."/>
            <person name="Titball R.W."/>
            <person name="Holden M.T.G."/>
            <person name="Prentice M.B."/>
            <person name="Sebaihia M."/>
            <person name="James K.D."/>
            <person name="Churcher C.M."/>
            <person name="Mungall K.L."/>
            <person name="Baker S."/>
            <person name="Basham D."/>
            <person name="Bentley S.D."/>
            <person name="Brooks K."/>
            <person name="Cerdeno-Tarraga A.-M."/>
            <person name="Chillingworth T."/>
            <person name="Cronin A."/>
            <person name="Davies R.M."/>
            <person name="Davis P."/>
            <person name="Dougan G."/>
            <person name="Feltwell T."/>
            <person name="Hamlin N."/>
            <person name="Holroyd S."/>
            <person name="Jagels K."/>
            <person name="Karlyshev A.V."/>
            <person name="Leather S."/>
            <person name="Moule S."/>
            <person name="Oyston P.C.F."/>
            <person name="Quail M.A."/>
            <person name="Rutherford K.M."/>
            <person name="Simmonds M."/>
            <person name="Skelton J."/>
            <person name="Stevens K."/>
            <person name="Whitehead S."/>
            <person name="Barrell B.G."/>
        </authorList>
    </citation>
    <scope>NUCLEOTIDE SEQUENCE [LARGE SCALE GENOMIC DNA]</scope>
    <source>
        <strain>CO-92 / Biovar Orientalis</strain>
    </source>
</reference>
<reference key="3">
    <citation type="journal article" date="2002" name="J. Bacteriol.">
        <title>Genome sequence of Yersinia pestis KIM.</title>
        <authorList>
            <person name="Deng W."/>
            <person name="Burland V."/>
            <person name="Plunkett G. III"/>
            <person name="Boutin A."/>
            <person name="Mayhew G.F."/>
            <person name="Liss P."/>
            <person name="Perna N.T."/>
            <person name="Rose D.J."/>
            <person name="Mau B."/>
            <person name="Zhou S."/>
            <person name="Schwartz D.C."/>
            <person name="Fetherston J.D."/>
            <person name="Lindler L.E."/>
            <person name="Brubaker R.R."/>
            <person name="Plano G.V."/>
            <person name="Straley S.C."/>
            <person name="McDonough K.A."/>
            <person name="Nilles M.L."/>
            <person name="Matson J.S."/>
            <person name="Blattner F.R."/>
            <person name="Perry R.D."/>
        </authorList>
    </citation>
    <scope>NUCLEOTIDE SEQUENCE [LARGE SCALE GENOMIC DNA]</scope>
    <source>
        <strain>KIM10+ / Biovar Mediaevalis</strain>
    </source>
</reference>
<reference key="4">
    <citation type="journal article" date="2004" name="DNA Res.">
        <title>Complete genome sequence of Yersinia pestis strain 91001, an isolate avirulent to humans.</title>
        <authorList>
            <person name="Song Y."/>
            <person name="Tong Z."/>
            <person name="Wang J."/>
            <person name="Wang L."/>
            <person name="Guo Z."/>
            <person name="Han Y."/>
            <person name="Zhang J."/>
            <person name="Pei D."/>
            <person name="Zhou D."/>
            <person name="Qin H."/>
            <person name="Pang X."/>
            <person name="Han Y."/>
            <person name="Zhai J."/>
            <person name="Li M."/>
            <person name="Cui B."/>
            <person name="Qi Z."/>
            <person name="Jin L."/>
            <person name="Dai R."/>
            <person name="Chen F."/>
            <person name="Li S."/>
            <person name="Ye C."/>
            <person name="Du Z."/>
            <person name="Lin W."/>
            <person name="Wang J."/>
            <person name="Yu J."/>
            <person name="Yang H."/>
            <person name="Wang J."/>
            <person name="Huang P."/>
            <person name="Yang R."/>
        </authorList>
    </citation>
    <scope>NUCLEOTIDE SEQUENCE [LARGE SCALE GENOMIC DNA]</scope>
    <source>
        <strain>91001 / Biovar Mediaevalis</strain>
    </source>
</reference>
<proteinExistence type="inferred from homology"/>
<organism>
    <name type="scientific">Yersinia pestis</name>
    <dbReference type="NCBI Taxonomy" id="632"/>
    <lineage>
        <taxon>Bacteria</taxon>
        <taxon>Pseudomonadati</taxon>
        <taxon>Pseudomonadota</taxon>
        <taxon>Gammaproteobacteria</taxon>
        <taxon>Enterobacterales</taxon>
        <taxon>Yersiniaceae</taxon>
        <taxon>Yersinia</taxon>
    </lineage>
</organism>
<feature type="chain" id="PRO_0000174654" description="Succinylglutamate desuccinylase">
    <location>
        <begin position="1"/>
        <end position="330"/>
    </location>
</feature>
<feature type="active site" evidence="1">
    <location>
        <position position="210"/>
    </location>
</feature>
<feature type="binding site" evidence="1">
    <location>
        <position position="53"/>
    </location>
    <ligand>
        <name>Zn(2+)</name>
        <dbReference type="ChEBI" id="CHEBI:29105"/>
    </ligand>
</feature>
<feature type="binding site" evidence="1">
    <location>
        <position position="56"/>
    </location>
    <ligand>
        <name>Zn(2+)</name>
        <dbReference type="ChEBI" id="CHEBI:29105"/>
    </ligand>
</feature>
<feature type="binding site" evidence="1">
    <location>
        <position position="147"/>
    </location>
    <ligand>
        <name>Zn(2+)</name>
        <dbReference type="ChEBI" id="CHEBI:29105"/>
    </ligand>
</feature>
<accession>Q9ZC70</accession>
<accession>Q0WFI3</accession>
<accession>Q8D0D9</accession>